<proteinExistence type="inferred from homology"/>
<keyword id="KW-1003">Cell membrane</keyword>
<keyword id="KW-0285">Flavoprotein</keyword>
<keyword id="KW-0288">FMN</keyword>
<keyword id="KW-0472">Membrane</keyword>
<keyword id="KW-0560">Oxidoreductase</keyword>
<keyword id="KW-0665">Pyrimidine biosynthesis</keyword>
<keyword id="KW-1185">Reference proteome</keyword>
<name>PYRD_ACAM1</name>
<protein>
    <recommendedName>
        <fullName evidence="1">Dihydroorotate dehydrogenase (quinone)</fullName>
        <ecNumber evidence="1">1.3.5.2</ecNumber>
    </recommendedName>
    <alternativeName>
        <fullName evidence="1">DHOdehase</fullName>
        <shortName evidence="1">DHOD</shortName>
        <shortName evidence="1">DHODase</shortName>
    </alternativeName>
    <alternativeName>
        <fullName evidence="1">Dihydroorotate oxidase</fullName>
    </alternativeName>
</protein>
<accession>B0CA74</accession>
<dbReference type="EC" id="1.3.5.2" evidence="1"/>
<dbReference type="EMBL" id="CP000828">
    <property type="protein sequence ID" value="ABW26661.1"/>
    <property type="molecule type" value="Genomic_DNA"/>
</dbReference>
<dbReference type="RefSeq" id="WP_012162181.1">
    <property type="nucleotide sequence ID" value="NC_009925.1"/>
</dbReference>
<dbReference type="SMR" id="B0CA74"/>
<dbReference type="STRING" id="329726.AM1_1640"/>
<dbReference type="KEGG" id="amr:AM1_1640"/>
<dbReference type="eggNOG" id="COG0167">
    <property type="taxonomic scope" value="Bacteria"/>
</dbReference>
<dbReference type="HOGENOM" id="CLU_013640_2_0_3"/>
<dbReference type="OrthoDB" id="9802377at2"/>
<dbReference type="UniPathway" id="UPA00070">
    <property type="reaction ID" value="UER00946"/>
</dbReference>
<dbReference type="Proteomes" id="UP000000268">
    <property type="component" value="Chromosome"/>
</dbReference>
<dbReference type="GO" id="GO:0005737">
    <property type="term" value="C:cytoplasm"/>
    <property type="evidence" value="ECO:0007669"/>
    <property type="project" value="InterPro"/>
</dbReference>
<dbReference type="GO" id="GO:0005886">
    <property type="term" value="C:plasma membrane"/>
    <property type="evidence" value="ECO:0007669"/>
    <property type="project" value="UniProtKB-SubCell"/>
</dbReference>
<dbReference type="GO" id="GO:0106430">
    <property type="term" value="F:dihydroorotate dehydrogenase (quinone) activity"/>
    <property type="evidence" value="ECO:0007669"/>
    <property type="project" value="UniProtKB-EC"/>
</dbReference>
<dbReference type="GO" id="GO:0006207">
    <property type="term" value="P:'de novo' pyrimidine nucleobase biosynthetic process"/>
    <property type="evidence" value="ECO:0007669"/>
    <property type="project" value="InterPro"/>
</dbReference>
<dbReference type="GO" id="GO:0044205">
    <property type="term" value="P:'de novo' UMP biosynthetic process"/>
    <property type="evidence" value="ECO:0007669"/>
    <property type="project" value="UniProtKB-UniRule"/>
</dbReference>
<dbReference type="CDD" id="cd04738">
    <property type="entry name" value="DHOD_2_like"/>
    <property type="match status" value="1"/>
</dbReference>
<dbReference type="Gene3D" id="3.20.20.70">
    <property type="entry name" value="Aldolase class I"/>
    <property type="match status" value="1"/>
</dbReference>
<dbReference type="HAMAP" id="MF_00225">
    <property type="entry name" value="DHO_dh_type2"/>
    <property type="match status" value="1"/>
</dbReference>
<dbReference type="InterPro" id="IPR013785">
    <property type="entry name" value="Aldolase_TIM"/>
</dbReference>
<dbReference type="InterPro" id="IPR050074">
    <property type="entry name" value="DHO_dehydrogenase"/>
</dbReference>
<dbReference type="InterPro" id="IPR005719">
    <property type="entry name" value="Dihydroorotate_DH_2"/>
</dbReference>
<dbReference type="InterPro" id="IPR005720">
    <property type="entry name" value="Dihydroorotate_DH_cat"/>
</dbReference>
<dbReference type="InterPro" id="IPR001295">
    <property type="entry name" value="Dihydroorotate_DH_CS"/>
</dbReference>
<dbReference type="NCBIfam" id="NF003651">
    <property type="entry name" value="PRK05286.2-4"/>
    <property type="match status" value="1"/>
</dbReference>
<dbReference type="NCBIfam" id="NF003652">
    <property type="entry name" value="PRK05286.2-5"/>
    <property type="match status" value="1"/>
</dbReference>
<dbReference type="NCBIfam" id="TIGR01036">
    <property type="entry name" value="pyrD_sub2"/>
    <property type="match status" value="1"/>
</dbReference>
<dbReference type="PANTHER" id="PTHR48109:SF4">
    <property type="entry name" value="DIHYDROOROTATE DEHYDROGENASE (QUINONE), MITOCHONDRIAL"/>
    <property type="match status" value="1"/>
</dbReference>
<dbReference type="PANTHER" id="PTHR48109">
    <property type="entry name" value="DIHYDROOROTATE DEHYDROGENASE (QUINONE), MITOCHONDRIAL-RELATED"/>
    <property type="match status" value="1"/>
</dbReference>
<dbReference type="Pfam" id="PF01180">
    <property type="entry name" value="DHO_dh"/>
    <property type="match status" value="1"/>
</dbReference>
<dbReference type="SUPFAM" id="SSF51395">
    <property type="entry name" value="FMN-linked oxidoreductases"/>
    <property type="match status" value="1"/>
</dbReference>
<dbReference type="PROSITE" id="PS00911">
    <property type="entry name" value="DHODEHASE_1"/>
    <property type="match status" value="1"/>
</dbReference>
<dbReference type="PROSITE" id="PS00912">
    <property type="entry name" value="DHODEHASE_2"/>
    <property type="match status" value="1"/>
</dbReference>
<gene>
    <name evidence="1" type="primary">pyrD</name>
    <name type="ordered locus">AM1_1640</name>
</gene>
<feature type="chain" id="PRO_1000078153" description="Dihydroorotate dehydrogenase (quinone)">
    <location>
        <begin position="1"/>
        <end position="374"/>
    </location>
</feature>
<feature type="active site" description="Nucleophile" evidence="1">
    <location>
        <position position="195"/>
    </location>
</feature>
<feature type="binding site" evidence="1">
    <location>
        <begin position="78"/>
        <end position="82"/>
    </location>
    <ligand>
        <name>FMN</name>
        <dbReference type="ChEBI" id="CHEBI:58210"/>
    </ligand>
</feature>
<feature type="binding site" evidence="1">
    <location>
        <position position="82"/>
    </location>
    <ligand>
        <name>substrate</name>
    </ligand>
</feature>
<feature type="binding site" evidence="1">
    <location>
        <position position="102"/>
    </location>
    <ligand>
        <name>FMN</name>
        <dbReference type="ChEBI" id="CHEBI:58210"/>
    </ligand>
</feature>
<feature type="binding site" evidence="1">
    <location>
        <begin position="127"/>
        <end position="131"/>
    </location>
    <ligand>
        <name>substrate</name>
    </ligand>
</feature>
<feature type="binding site" evidence="1">
    <location>
        <position position="159"/>
    </location>
    <ligand>
        <name>FMN</name>
        <dbReference type="ChEBI" id="CHEBI:58210"/>
    </ligand>
</feature>
<feature type="binding site" evidence="1">
    <location>
        <position position="192"/>
    </location>
    <ligand>
        <name>FMN</name>
        <dbReference type="ChEBI" id="CHEBI:58210"/>
    </ligand>
</feature>
<feature type="binding site" evidence="1">
    <location>
        <position position="192"/>
    </location>
    <ligand>
        <name>substrate</name>
    </ligand>
</feature>
<feature type="binding site" evidence="1">
    <location>
        <position position="197"/>
    </location>
    <ligand>
        <name>substrate</name>
    </ligand>
</feature>
<feature type="binding site" evidence="1">
    <location>
        <position position="230"/>
    </location>
    <ligand>
        <name>FMN</name>
        <dbReference type="ChEBI" id="CHEBI:58210"/>
    </ligand>
</feature>
<feature type="binding site" evidence="1">
    <location>
        <position position="258"/>
    </location>
    <ligand>
        <name>FMN</name>
        <dbReference type="ChEBI" id="CHEBI:58210"/>
    </ligand>
</feature>
<feature type="binding site" evidence="1">
    <location>
        <begin position="259"/>
        <end position="260"/>
    </location>
    <ligand>
        <name>substrate</name>
    </ligand>
</feature>
<feature type="binding site" evidence="1">
    <location>
        <position position="287"/>
    </location>
    <ligand>
        <name>FMN</name>
        <dbReference type="ChEBI" id="CHEBI:58210"/>
    </ligand>
</feature>
<feature type="binding site" evidence="1">
    <location>
        <position position="316"/>
    </location>
    <ligand>
        <name>FMN</name>
        <dbReference type="ChEBI" id="CHEBI:58210"/>
    </ligand>
</feature>
<feature type="binding site" evidence="1">
    <location>
        <begin position="337"/>
        <end position="338"/>
    </location>
    <ligand>
        <name>FMN</name>
        <dbReference type="ChEBI" id="CHEBI:58210"/>
    </ligand>
</feature>
<evidence type="ECO:0000255" key="1">
    <source>
        <dbReference type="HAMAP-Rule" id="MF_00225"/>
    </source>
</evidence>
<sequence length="374" mass="40679">MDLYQQGLQPLLFSALKADPETVHRQLMRTCAWLDRNVDQGLAQGLQRRLASSLQVEDPRLSQSLWGLSFANPIGLAAGFDKDGVATNIWPRFGFGFAEVGTVTFHAQPGNPQPRLFRLPEDQAALNRMGFNNQGAAAMAKVIAASLDRQARSYPLGINLGKSKVTPLEQAVADYVGSFQLLKTYGDYFVVNVSSPNTPGLRSLQAVEQLAPILAGLQAENTEGKPLLVKIAPDLEWKDIAAIVDLAQVHQLAGIIATNTTIRRDLKTERIAATGNVPSEEAGGISGAPVRSRSTDVIRFIHKQTQGQLPIIGVGGIFTAEDAWEKLCAGASLLQVYTGWVYEGPWMVRRILEGLLVKMQEEGIQQLSEIVGQK</sequence>
<reference key="1">
    <citation type="journal article" date="2008" name="Proc. Natl. Acad. Sci. U.S.A.">
        <title>Niche adaptation and genome expansion in the chlorophyll d-producing cyanobacterium Acaryochloris marina.</title>
        <authorList>
            <person name="Swingley W.D."/>
            <person name="Chen M."/>
            <person name="Cheung P.C."/>
            <person name="Conrad A.L."/>
            <person name="Dejesa L.C."/>
            <person name="Hao J."/>
            <person name="Honchak B.M."/>
            <person name="Karbach L.E."/>
            <person name="Kurdoglu A."/>
            <person name="Lahiri S."/>
            <person name="Mastrian S.D."/>
            <person name="Miyashita H."/>
            <person name="Page L."/>
            <person name="Ramakrishna P."/>
            <person name="Satoh S."/>
            <person name="Sattley W.M."/>
            <person name="Shimada Y."/>
            <person name="Taylor H.L."/>
            <person name="Tomo T."/>
            <person name="Tsuchiya T."/>
            <person name="Wang Z.T."/>
            <person name="Raymond J."/>
            <person name="Mimuro M."/>
            <person name="Blankenship R.E."/>
            <person name="Touchman J.W."/>
        </authorList>
    </citation>
    <scope>NUCLEOTIDE SEQUENCE [LARGE SCALE GENOMIC DNA]</scope>
    <source>
        <strain>MBIC 11017</strain>
    </source>
</reference>
<comment type="function">
    <text evidence="1">Catalyzes the conversion of dihydroorotate to orotate with quinone as electron acceptor.</text>
</comment>
<comment type="catalytic activity">
    <reaction evidence="1">
        <text>(S)-dihydroorotate + a quinone = orotate + a quinol</text>
        <dbReference type="Rhea" id="RHEA:30187"/>
        <dbReference type="ChEBI" id="CHEBI:24646"/>
        <dbReference type="ChEBI" id="CHEBI:30839"/>
        <dbReference type="ChEBI" id="CHEBI:30864"/>
        <dbReference type="ChEBI" id="CHEBI:132124"/>
        <dbReference type="EC" id="1.3.5.2"/>
    </reaction>
</comment>
<comment type="cofactor">
    <cofactor evidence="1">
        <name>FMN</name>
        <dbReference type="ChEBI" id="CHEBI:58210"/>
    </cofactor>
    <text evidence="1">Binds 1 FMN per subunit.</text>
</comment>
<comment type="pathway">
    <text evidence="1">Pyrimidine metabolism; UMP biosynthesis via de novo pathway; orotate from (S)-dihydroorotate (quinone route): step 1/1.</text>
</comment>
<comment type="subunit">
    <text evidence="1">Monomer.</text>
</comment>
<comment type="subcellular location">
    <subcellularLocation>
        <location evidence="1">Cell membrane</location>
        <topology evidence="1">Peripheral membrane protein</topology>
    </subcellularLocation>
</comment>
<comment type="similarity">
    <text evidence="1">Belongs to the dihydroorotate dehydrogenase family. Type 2 subfamily.</text>
</comment>
<organism>
    <name type="scientific">Acaryochloris marina (strain MBIC 11017)</name>
    <dbReference type="NCBI Taxonomy" id="329726"/>
    <lineage>
        <taxon>Bacteria</taxon>
        <taxon>Bacillati</taxon>
        <taxon>Cyanobacteriota</taxon>
        <taxon>Cyanophyceae</taxon>
        <taxon>Acaryochloridales</taxon>
        <taxon>Acaryochloridaceae</taxon>
        <taxon>Acaryochloris</taxon>
    </lineage>
</organism>